<protein>
    <recommendedName>
        <fullName evidence="2">Spike glycoprotein</fullName>
        <shortName evidence="2">S glycoprotein</shortName>
    </recommendedName>
    <alternativeName>
        <fullName evidence="2">E2</fullName>
    </alternativeName>
    <alternativeName>
        <fullName evidence="2">Peplomer protein</fullName>
    </alternativeName>
    <component>
        <recommendedName>
            <fullName evidence="2">Spike protein S1</fullName>
        </recommendedName>
    </component>
    <component>
        <recommendedName>
            <fullName evidence="2">Spike protein S2</fullName>
        </recommendedName>
    </component>
    <component>
        <recommendedName>
            <fullName evidence="2">Spike protein S2'</fullName>
        </recommendedName>
    </component>
</protein>
<keyword id="KW-0002">3D-structure</keyword>
<keyword id="KW-0175">Coiled coil</keyword>
<keyword id="KW-1015">Disulfide bond</keyword>
<keyword id="KW-1170">Fusion of virus membrane with host endosomal membrane</keyword>
<keyword id="KW-1168">Fusion of virus membrane with host membrane</keyword>
<keyword id="KW-0325">Glycoprotein</keyword>
<keyword id="KW-1032">Host cell membrane</keyword>
<keyword id="KW-1043">Host membrane</keyword>
<keyword id="KW-0945">Host-virus interaction</keyword>
<keyword id="KW-0449">Lipoprotein</keyword>
<keyword id="KW-0472">Membrane</keyword>
<keyword id="KW-0564">Palmitate</keyword>
<keyword id="KW-1185">Reference proteome</keyword>
<keyword id="KW-0732">Signal</keyword>
<keyword id="KW-0812">Transmembrane</keyword>
<keyword id="KW-1133">Transmembrane helix</keyword>
<keyword id="KW-1161">Viral attachment to host cell</keyword>
<keyword id="KW-0261">Viral envelope protein</keyword>
<keyword id="KW-1162">Viral penetration into host cytoplasm</keyword>
<keyword id="KW-0946">Virion</keyword>
<keyword id="KW-0843">Virulence</keyword>
<keyword id="KW-1160">Virus entry into host cell</keyword>
<accession>A3EXG6</accession>
<feature type="signal peptide" evidence="2">
    <location>
        <begin position="1"/>
        <end position="11"/>
    </location>
</feature>
<feature type="chain" id="PRO_0000291368" description="Spike glycoprotein">
    <location>
        <begin position="12"/>
        <end position="1274"/>
    </location>
</feature>
<feature type="chain" id="PRO_0000291369" description="Spike protein S1">
    <location>
        <begin position="12"/>
        <end position="676"/>
    </location>
</feature>
<feature type="chain" id="PRO_0000291370" description="Spike protein S2">
    <location>
        <begin position="677"/>
        <end position="1274"/>
    </location>
</feature>
<feature type="chain" id="PRO_0000444065" description="Spike protein S2'" evidence="2">
    <location>
        <begin position="810"/>
        <end position="1274"/>
    </location>
</feature>
<feature type="topological domain" description="Extracellular" evidence="2">
    <location>
        <begin position="12"/>
        <end position="1212"/>
    </location>
</feature>
<feature type="transmembrane region" description="Helical" evidence="2">
    <location>
        <begin position="1213"/>
        <end position="1233"/>
    </location>
</feature>
<feature type="topological domain" description="Cytoplasmic" evidence="2">
    <location>
        <begin position="1234"/>
        <end position="1274"/>
    </location>
</feature>
<feature type="domain" description="BetaCoV S1-NTD" evidence="4">
    <location>
        <begin position="15"/>
        <end position="325"/>
    </location>
</feature>
<feature type="domain" description="BetaCoV S1-CTD" evidence="3">
    <location>
        <begin position="355"/>
        <end position="519"/>
    </location>
</feature>
<feature type="region of interest" description="Fusion peptide 1" evidence="2">
    <location>
        <begin position="810"/>
        <end position="831"/>
    </location>
</feature>
<feature type="region of interest" description="Fusion peptide 2" evidence="2">
    <location>
        <begin position="829"/>
        <end position="852"/>
    </location>
</feature>
<feature type="region of interest" description="Heptad repeat 1" evidence="2">
    <location>
        <begin position="917"/>
        <end position="967"/>
    </location>
</feature>
<feature type="region of interest" description="Heptad repeat 2" evidence="2">
    <location>
        <begin position="1162"/>
        <end position="1201"/>
    </location>
</feature>
<feature type="coiled-coil region" evidence="2">
    <location>
        <begin position="946"/>
        <end position="990"/>
    </location>
</feature>
<feature type="coiled-coil region" evidence="2">
    <location>
        <begin position="1174"/>
        <end position="1202"/>
    </location>
</feature>
<feature type="short sequence motif" description="KxHxx" evidence="2">
    <location>
        <begin position="1273"/>
        <end position="1274"/>
    </location>
</feature>
<feature type="site" description="Cleavage" evidence="1">
    <location>
        <begin position="676"/>
        <end position="677"/>
    </location>
</feature>
<feature type="site" description="Cleavage" evidence="2">
    <location>
        <begin position="809"/>
        <end position="810"/>
    </location>
</feature>
<feature type="glycosylation site" description="N-linked (GlcNAc...) asparagine; by host" evidence="2">
    <location>
        <position position="30"/>
    </location>
</feature>
<feature type="glycosylation site" description="N-linked (GlcNAc...) asparagine; by host" evidence="2">
    <location>
        <position position="34"/>
    </location>
</feature>
<feature type="glycosylation site" description="N-linked (GlcNAc...) asparagine; by host" evidence="2">
    <location>
        <position position="90"/>
    </location>
</feature>
<feature type="glycosylation site" description="N-linked (GlcNAc...) asparagine; by host" evidence="2">
    <location>
        <position position="154"/>
    </location>
</feature>
<feature type="glycosylation site" description="N-linked (GlcNAc...) asparagine; by host" evidence="2">
    <location>
        <position position="165"/>
    </location>
</feature>
<feature type="glycosylation site" description="N-linked (GlcNAc...) asparagine; by host" evidence="2">
    <location>
        <position position="199"/>
    </location>
</feature>
<feature type="glycosylation site" description="N-linked (GlcNAc...) asparagine; by host" evidence="2">
    <location>
        <position position="205"/>
    </location>
</feature>
<feature type="glycosylation site" description="N-linked (GlcNAc...) asparagine; by host" evidence="2">
    <location>
        <position position="304"/>
    </location>
</feature>
<feature type="glycosylation site" description="N-linked (GlcNAc...) asparagine; by host" evidence="2">
    <location>
        <position position="423"/>
    </location>
</feature>
<feature type="glycosylation site" description="N-linked (GlcNAc...) asparagine; by host" evidence="2">
    <location>
        <position position="459"/>
    </location>
</feature>
<feature type="glycosylation site" description="N-linked (GlcNAc...) asparagine; by host" evidence="2">
    <location>
        <position position="521"/>
    </location>
</feature>
<feature type="glycosylation site" description="N-linked (GlcNAc...) asparagine; by host" evidence="2">
    <location>
        <position position="547"/>
    </location>
</feature>
<feature type="glycosylation site" description="N-linked (GlcNAc...) asparagine; by host" evidence="2">
    <location>
        <position position="572"/>
    </location>
</feature>
<feature type="glycosylation site" description="N-linked (GlcNAc...) asparagine; by host" evidence="2">
    <location>
        <position position="644"/>
    </location>
</feature>
<feature type="glycosylation site" description="N-linked (GlcNAc...) asparagine; by host" evidence="2">
    <location>
        <position position="663"/>
    </location>
</feature>
<feature type="glycosylation site" description="N-linked (GlcNAc...) asparagine; by host" evidence="2">
    <location>
        <position position="688"/>
    </location>
</feature>
<feature type="glycosylation site" description="N-linked (GlcNAc...) asparagine; by host" evidence="2">
    <location>
        <position position="705"/>
    </location>
</feature>
<feature type="glycosylation site" description="N-linked (GlcNAc...) asparagine; by host" evidence="2">
    <location>
        <position position="791"/>
    </location>
</feature>
<feature type="glycosylation site" description="N-linked (GlcNAc...) asparagine; by host" evidence="2">
    <location>
        <position position="1042"/>
    </location>
</feature>
<feature type="glycosylation site" description="N-linked (GlcNAc...) asparagine; by host" evidence="2">
    <location>
        <position position="1081"/>
    </location>
</feature>
<feature type="glycosylation site" description="N-linked (GlcNAc...) asparagine; by host" evidence="2">
    <location>
        <position position="1096"/>
    </location>
</feature>
<feature type="glycosylation site" description="N-linked (GlcNAc...) asparagine; by host" evidence="2">
    <location>
        <position position="1113"/>
    </location>
</feature>
<feature type="glycosylation site" description="N-linked (GlcNAc...) asparagine; by host" evidence="2">
    <location>
        <position position="1128"/>
    </location>
</feature>
<feature type="glycosylation site" description="N-linked (GlcNAc...) asparagine; by host" evidence="2">
    <location>
        <position position="1133"/>
    </location>
</feature>
<feature type="glycosylation site" description="N-linked (GlcNAc...) asparagine; by host" evidence="2">
    <location>
        <position position="1157"/>
    </location>
</feature>
<feature type="glycosylation site" description="N-linked (GlcNAc...) asparagine; by host" evidence="2">
    <location>
        <position position="1163"/>
    </location>
</feature>
<feature type="glycosylation site" description="N-linked (GlcNAc...) asparagine; by host" evidence="2">
    <location>
        <position position="1172"/>
    </location>
</feature>
<feature type="glycosylation site" description="N-linked (GlcNAc...) asparagine; by host" evidence="2">
    <location>
        <position position="1193"/>
    </location>
</feature>
<feature type="disulfide bond" evidence="4">
    <location>
        <begin position="19"/>
        <end position="169"/>
    </location>
</feature>
<feature type="disulfide bond" evidence="4">
    <location>
        <begin position="163"/>
        <end position="196"/>
    </location>
</feature>
<feature type="disulfide bond" evidence="4">
    <location>
        <begin position="313"/>
        <end position="323"/>
    </location>
</feature>
<feature type="disulfide bond" evidence="3">
    <location>
        <begin position="357"/>
        <end position="381"/>
    </location>
</feature>
<feature type="disulfide bond" evidence="3">
    <location>
        <begin position="399"/>
        <end position="452"/>
    </location>
</feature>
<feature type="disulfide bond" evidence="3">
    <location>
        <begin position="411"/>
        <end position="517"/>
    </location>
</feature>
<feature type="disulfide bond" evidence="2">
    <location>
        <begin position="834"/>
        <end position="848"/>
    </location>
</feature>
<feature type="helix" evidence="5">
    <location>
        <begin position="361"/>
        <end position="365"/>
    </location>
</feature>
<feature type="helix" evidence="5">
    <location>
        <begin position="370"/>
        <end position="372"/>
    </location>
</feature>
<feature type="strand" evidence="5">
    <location>
        <begin position="374"/>
        <end position="378"/>
    </location>
</feature>
<feature type="strand" evidence="5">
    <location>
        <begin position="380"/>
        <end position="383"/>
    </location>
</feature>
<feature type="helix" evidence="5">
    <location>
        <begin position="385"/>
        <end position="388"/>
    </location>
</feature>
<feature type="strand" evidence="5">
    <location>
        <begin position="394"/>
        <end position="402"/>
    </location>
</feature>
<feature type="helix" evidence="5">
    <location>
        <begin position="404"/>
        <end position="407"/>
    </location>
</feature>
<feature type="strand" evidence="5">
    <location>
        <begin position="412"/>
        <end position="422"/>
    </location>
</feature>
<feature type="helix" evidence="5">
    <location>
        <begin position="424"/>
        <end position="432"/>
    </location>
</feature>
<feature type="helix" evidence="5">
    <location>
        <begin position="437"/>
        <end position="441"/>
    </location>
</feature>
<feature type="strand" evidence="5">
    <location>
        <begin position="451"/>
        <end position="462"/>
    </location>
</feature>
<feature type="helix" evidence="5">
    <location>
        <begin position="481"/>
        <end position="490"/>
    </location>
</feature>
<feature type="helix" evidence="5">
    <location>
        <begin position="491"/>
        <end position="493"/>
    </location>
</feature>
<feature type="strand" evidence="5">
    <location>
        <begin position="497"/>
        <end position="508"/>
    </location>
</feature>
<feature type="strand" evidence="5">
    <location>
        <begin position="512"/>
        <end position="514"/>
    </location>
</feature>
<feature type="strand" evidence="5">
    <location>
        <begin position="516"/>
        <end position="518"/>
    </location>
</feature>
<name>SPIKE_BCHK9</name>
<organismHost>
    <name type="scientific">Rousettus leschenaultii</name>
    <name type="common">Leschenault's rousette</name>
    <name type="synonym">Pteropus leschenaultii</name>
    <dbReference type="NCBI Taxonomy" id="9408"/>
</organismHost>
<organism>
    <name type="scientific">Bat coronavirus HKU9</name>
    <name type="common">BtCoV</name>
    <name type="synonym">BtCoV/HKU9</name>
    <dbReference type="NCBI Taxonomy" id="694006"/>
    <lineage>
        <taxon>Viruses</taxon>
        <taxon>Riboviria</taxon>
        <taxon>Orthornavirae</taxon>
        <taxon>Pisuviricota</taxon>
        <taxon>Pisoniviricetes</taxon>
        <taxon>Nidovirales</taxon>
        <taxon>Cornidovirineae</taxon>
        <taxon>Coronaviridae</taxon>
        <taxon>Orthocoronavirinae</taxon>
        <taxon>Betacoronavirus</taxon>
        <taxon>Nobecovirus</taxon>
    </lineage>
</organism>
<gene>
    <name evidence="2" type="primary">S</name>
    <name type="ORF">2</name>
</gene>
<reference key="1">
    <citation type="journal article" date="2007" name="J. Virol.">
        <title>Comparative analysis of twelve genomes of three novel group 2c and group 2d coronaviruses reveals unique group and subgroup features.</title>
        <authorList>
            <person name="Woo P.C.Y."/>
            <person name="Wang M."/>
            <person name="Lau S.K.P."/>
            <person name="Xu H.F."/>
            <person name="Poon R.W.S."/>
            <person name="Guo R."/>
            <person name="Wong B.H.L."/>
            <person name="Gao K."/>
            <person name="Tsoi H.-W."/>
            <person name="Huang Y."/>
            <person name="Li K.S.M."/>
            <person name="Lam C.S.F."/>
            <person name="Chan K.-H."/>
            <person name="Zheng B.-J."/>
            <person name="Yuen K.-Y."/>
        </authorList>
    </citation>
    <scope>NUCLEOTIDE SEQUENCE [GENOMIC RNA]</scope>
    <source>
        <strain>Isolate HKU9-1</strain>
    </source>
</reference>
<proteinExistence type="evidence at protein level"/>
<dbReference type="EMBL" id="EF065513">
    <property type="protein sequence ID" value="ABN10911.1"/>
    <property type="molecule type" value="Genomic_RNA"/>
</dbReference>
<dbReference type="RefSeq" id="YP_001039971.1">
    <property type="nucleotide sequence ID" value="NC_009021.1"/>
</dbReference>
<dbReference type="PDB" id="5GYQ">
    <property type="method" value="X-ray"/>
    <property type="resolution" value="2.10 A"/>
    <property type="chains" value="A=355-521"/>
</dbReference>
<dbReference type="PDBsum" id="5GYQ"/>
<dbReference type="SMR" id="A3EXG6"/>
<dbReference type="IntAct" id="A3EXG6">
    <property type="interactions" value="1"/>
</dbReference>
<dbReference type="GlyCosmos" id="A3EXG6">
    <property type="glycosylation" value="28 sites, No reported glycans"/>
</dbReference>
<dbReference type="GeneID" id="4836012"/>
<dbReference type="KEGG" id="vg:4836012"/>
<dbReference type="Proteomes" id="UP000006576">
    <property type="component" value="Genome"/>
</dbReference>
<dbReference type="GO" id="GO:0044173">
    <property type="term" value="C:host cell endoplasmic reticulum-Golgi intermediate compartment membrane"/>
    <property type="evidence" value="ECO:0007669"/>
    <property type="project" value="UniProtKB-SubCell"/>
</dbReference>
<dbReference type="GO" id="GO:0020002">
    <property type="term" value="C:host cell plasma membrane"/>
    <property type="evidence" value="ECO:0007669"/>
    <property type="project" value="UniProtKB-SubCell"/>
</dbReference>
<dbReference type="GO" id="GO:0016020">
    <property type="term" value="C:membrane"/>
    <property type="evidence" value="ECO:0007669"/>
    <property type="project" value="UniProtKB-UniRule"/>
</dbReference>
<dbReference type="GO" id="GO:0019031">
    <property type="term" value="C:viral envelope"/>
    <property type="evidence" value="ECO:0007669"/>
    <property type="project" value="UniProtKB-UniRule"/>
</dbReference>
<dbReference type="GO" id="GO:0055036">
    <property type="term" value="C:virion membrane"/>
    <property type="evidence" value="ECO:0007669"/>
    <property type="project" value="UniProtKB-SubCell"/>
</dbReference>
<dbReference type="GO" id="GO:0075509">
    <property type="term" value="P:endocytosis involved in viral entry into host cell"/>
    <property type="evidence" value="ECO:0007669"/>
    <property type="project" value="UniProtKB-UniRule"/>
</dbReference>
<dbReference type="GO" id="GO:0039654">
    <property type="term" value="P:fusion of virus membrane with host endosome membrane"/>
    <property type="evidence" value="ECO:0007669"/>
    <property type="project" value="UniProtKB-UniRule"/>
</dbReference>
<dbReference type="GO" id="GO:0019064">
    <property type="term" value="P:fusion of virus membrane with host plasma membrane"/>
    <property type="evidence" value="ECO:0007669"/>
    <property type="project" value="UniProtKB-UniRule"/>
</dbReference>
<dbReference type="GO" id="GO:0046813">
    <property type="term" value="P:receptor-mediated virion attachment to host cell"/>
    <property type="evidence" value="ECO:0007669"/>
    <property type="project" value="UniProtKB-UniRule"/>
</dbReference>
<dbReference type="CDD" id="cd22381">
    <property type="entry name" value="bat-HKU9-CoV-like_Spike_SD1-2_S1-S2_S2"/>
    <property type="match status" value="1"/>
</dbReference>
<dbReference type="CDD" id="cd21627">
    <property type="entry name" value="batCoV-HKU9-like_Spike_S1_NTD"/>
    <property type="match status" value="1"/>
</dbReference>
<dbReference type="Gene3D" id="1.20.5.300">
    <property type="match status" value="1"/>
</dbReference>
<dbReference type="Gene3D" id="3.30.70.1840">
    <property type="match status" value="1"/>
</dbReference>
<dbReference type="Gene3D" id="1.20.5.790">
    <property type="entry name" value="Single helix bin"/>
    <property type="match status" value="1"/>
</dbReference>
<dbReference type="Gene3D" id="2.60.120.960">
    <property type="entry name" value="Spike glycoprotein, N-terminal domain"/>
    <property type="match status" value="1"/>
</dbReference>
<dbReference type="HAMAP" id="MF_04099">
    <property type="entry name" value="BETA_CORONA_SPIKE"/>
    <property type="match status" value="1"/>
</dbReference>
<dbReference type="InterPro" id="IPR032500">
    <property type="entry name" value="bCoV_S1_N"/>
</dbReference>
<dbReference type="InterPro" id="IPR042578">
    <property type="entry name" value="BETA_CORONA_SPIKE"/>
</dbReference>
<dbReference type="InterPro" id="IPR043607">
    <property type="entry name" value="CoV_S1_C"/>
</dbReference>
<dbReference type="InterPro" id="IPR043473">
    <property type="entry name" value="S2_sf_CoV"/>
</dbReference>
<dbReference type="InterPro" id="IPR043002">
    <property type="entry name" value="Spike_N_sf"/>
</dbReference>
<dbReference type="InterPro" id="IPR044338">
    <property type="entry name" value="Spike_S1_N_batCoV-HKU9-like"/>
</dbReference>
<dbReference type="InterPro" id="IPR018548">
    <property type="entry name" value="Spike_S1_RBD_bCoV"/>
</dbReference>
<dbReference type="InterPro" id="IPR036326">
    <property type="entry name" value="Spike_S1_RBD_sf_bCoV"/>
</dbReference>
<dbReference type="InterPro" id="IPR002552">
    <property type="entry name" value="Spike_S2_CoV"/>
</dbReference>
<dbReference type="InterPro" id="IPR043614">
    <property type="entry name" value="Spike_S2_CoV_C"/>
</dbReference>
<dbReference type="InterPro" id="IPR044873">
    <property type="entry name" value="Spike_S2_CoV_HR1"/>
</dbReference>
<dbReference type="InterPro" id="IPR044874">
    <property type="entry name" value="Spike_S2_CoV_HR2"/>
</dbReference>
<dbReference type="Pfam" id="PF16451">
    <property type="entry name" value="bCoV_S1_N"/>
    <property type="match status" value="1"/>
</dbReference>
<dbReference type="Pfam" id="PF09408">
    <property type="entry name" value="bCoV_S1_RBD"/>
    <property type="match status" value="1"/>
</dbReference>
<dbReference type="Pfam" id="PF19209">
    <property type="entry name" value="CoV_S1_C"/>
    <property type="match status" value="1"/>
</dbReference>
<dbReference type="Pfam" id="PF01601">
    <property type="entry name" value="CoV_S2"/>
    <property type="match status" value="1"/>
</dbReference>
<dbReference type="Pfam" id="PF19214">
    <property type="entry name" value="CoV_S2_C"/>
    <property type="match status" value="1"/>
</dbReference>
<dbReference type="SUPFAM" id="SSF111474">
    <property type="entry name" value="Coronavirus S2 glycoprotein"/>
    <property type="match status" value="2"/>
</dbReference>
<dbReference type="SUPFAM" id="SSF143587">
    <property type="entry name" value="SARS receptor-binding domain-like"/>
    <property type="match status" value="1"/>
</dbReference>
<dbReference type="PROSITE" id="PS51921">
    <property type="entry name" value="BCOV_S1_CTD"/>
    <property type="match status" value="1"/>
</dbReference>
<dbReference type="PROSITE" id="PS51922">
    <property type="entry name" value="BCOV_S1_NTD"/>
    <property type="match status" value="1"/>
</dbReference>
<dbReference type="PROSITE" id="PS51923">
    <property type="entry name" value="COV_S2_HR1"/>
    <property type="match status" value="1"/>
</dbReference>
<dbReference type="PROSITE" id="PS51924">
    <property type="entry name" value="COV_S2_HR2"/>
    <property type="match status" value="1"/>
</dbReference>
<evidence type="ECO:0000250" key="1"/>
<evidence type="ECO:0000255" key="2">
    <source>
        <dbReference type="HAMAP-Rule" id="MF_04099"/>
    </source>
</evidence>
<evidence type="ECO:0000255" key="3">
    <source>
        <dbReference type="PROSITE-ProRule" id="PRU01269"/>
    </source>
</evidence>
<evidence type="ECO:0000255" key="4">
    <source>
        <dbReference type="PROSITE-ProRule" id="PRU01270"/>
    </source>
</evidence>
<evidence type="ECO:0007829" key="5">
    <source>
        <dbReference type="PDB" id="5GYQ"/>
    </source>
</evidence>
<sequence>MLLILVLGVSLAAASRPECFNPRFTLTPLNHTLNYTSIKAKVSNVLLPDPYIAYSGQTLRQNLFMADMSNTILYPVTPPANGANGGFIYNTSIIPVSAGLFVNTWMYRQPASSRAYCQEPFGVAFGDTFENDRIAILIMAPDNLGSWSAVAPRNQTNIYLLVCSNATLCINPGFNRWGPAGSFIAPDALVDHSNSCFVNNTFSVNISTSRISLAFLFKDGDLLIYHSGWLPTSNFEHGFSRGSHPMTYFMSLPVGGNLPRAQFFQSIVRSNAIDKGDGMCTNFDVNLHVAHLINRDLLVSYFNNGSVANAADCADSAAEELYCVTGSFDPPTGVYPLSRYRAQVAGFVRVTQRGSYCTPPYSVLQDPPQPVVWRRYMLYDCVFDFTVVVDSLPTHQLQCYGVSPRRLASMCYGSVTLDVMRINETHLNNLFNRVPDTFSLYNYALPDNFYGCLHAFYLNSTAPYAVANRFPIKPGGRQSNSAFIDTVINAAHYSPFSYVYGLAVITLKPAAGSKLVCPVANDTVVITDRCVQYNLYGYTGTGVLSKNTSLVIPDGKVFTASSTGTIIGVSINSTTYSIMPCVTVPVSVGYHPNFERALLFNGLSCSQRSRAVTEPVSVLWSASATAQDAFDTPSGCVVNVELRNTTIVNTCAMPIGNSLCFINGSIATANADSLPRLQLVNYDPLYDNSTATPMTPVYWVKVPTNFTLSATEEYIQTTAPKITIDCARYLCGDSSRCLNVLLHYGTFCNDINKALSRVSTILDSALLSLVKELSINTRDEVTTFSFDGDYNFTGLMGCLGPNCGATTYRSAFSDLLYDKVRITDPGFMQSYQKCIDSQWGGSIRDLLCTQTYNGIAVLPPIVSPAMQALYTSLLVGAVASSGYTFGITSAGVIPFATQLQFRLNGIGVTTQVLVENQKLIASSFNNALVNIQKGFTETSIALSKMQDVINQHAAQLHTLVVQLGNSFGAISSSINEIFSRLEGLAANAEVDRLINGRMMVLNTYVTQLLIQASEAKAQNALAAQKISECVKAQSLRNDFCGNGTHVLSIPQLAPNGVLFIHYAYTPTEYAFVQTSAGLCHNGTGYAPRQGMFVLPNNTNMWHFTTMQFYNPVNISASNTQVLTSCSVNYTSVNYTVLEPSVPGDYDFQKEFDKFYKNLSTIFNNTFNPNDFNFSTVDVTAQIKSLHDVVNQLNQSFIDLKKLNVYEKTIKWPWYVWLAMIAGIVGLVLAVIMLMCMTNCCSCFKGMCDCRRCCGSYDSYDDVYPAVRVNKKRTV</sequence>
<comment type="function">
    <molecule>Spike protein S1</molecule>
    <text evidence="2">Attaches the virion to the cell membrane by interacting with host receptor, initiating the infection.</text>
</comment>
<comment type="function">
    <molecule>Spike protein S2</molecule>
    <text evidence="2">Mediates fusion of the virion and cellular membranes by acting as a class I viral fusion protein. Under the current model, the protein has at least three conformational states: pre-fusion native state, pre-hairpin intermediate state, and post-fusion hairpin state. During viral and target cell membrane fusion, the coiled coil regions (heptad repeats) assume a trimer-of-hairpins structure, positioning the fusion peptide in close proximity to the C-terminal region of the ectodomain. The formation of this structure appears to drive apposition and subsequent fusion of viral and target cell membranes.</text>
</comment>
<comment type="function">
    <molecule>Spike protein S2'</molecule>
    <text evidence="2">Acts as a viral fusion peptide which is unmasked following S2 cleavage occurring upon virus endocytosis.</text>
</comment>
<comment type="subunit">
    <text evidence="2">Homotrimer; each monomer consists of a S1 and a S2 subunit. The resulting peplomers protrude from the virus surface as spikes.</text>
</comment>
<comment type="subcellular location">
    <subcellularLocation>
        <location evidence="2">Virion membrane</location>
        <topology evidence="2">Single-pass type I membrane protein</topology>
    </subcellularLocation>
    <subcellularLocation>
        <location evidence="2">Host endoplasmic reticulum-Golgi intermediate compartment membrane</location>
        <topology evidence="2">Single-pass type I membrane protein</topology>
    </subcellularLocation>
    <subcellularLocation>
        <location evidence="2">Host cell membrane</location>
        <topology evidence="2">Single-pass type I membrane protein</topology>
    </subcellularLocation>
    <text evidence="2">Accumulates in the endoplasmic reticulum-Golgi intermediate compartment, where it participates in virus particle assembly. Some S oligomers are transported to the host plasma membrane, where they may mediate cell-cell fusion.</text>
</comment>
<comment type="domain">
    <text evidence="2">Fusion peptide 1 (FP1) and fusion peptide 2 (FP2) function cooperatively and have a membrane-ordering effect on lipid headgroups and shallow hydrophobic regions of target bilayers. They are considered as two domains of an extended, bipartite FP. The membrane-ordering activity is calcium-dependent and also dependent on correct folding, which is maintained by an internal disulfide bond in FP2.</text>
</comment>
<comment type="PTM">
    <text evidence="2">Specific enzymatic cleavages in vivo yield mature proteins. The precursor is processed into S1 and S2 by host cell furin or another cellular protease to yield the mature S1 and S2 proteins. Additionally, a second cleavage leads to the release of a fusion peptide after viral attachment to host cell receptor.</text>
</comment>
<comment type="PTM">
    <text evidence="2">The cytoplasmic Cys-rich domain is palmitoylated. Spike glycoprotein is digested within host endosomes.</text>
</comment>
<comment type="similarity">
    <text evidence="2">Belongs to the betacoronaviruses spike protein family.</text>
</comment>